<name>NDK_VIBC1</name>
<sequence length="141" mass="15818">MALERTFSIVKPDAVERNLIGEIYHRIEKAGLRIVAAKMVHLTEEQASGFYAEHEGKPFFPALKEFMTSGPIMVQVLEGEDAIARYRELMGKTNPEEAACGTIRADYALSMRHNSVHGSDSPESAAREIEFFFPESEICPR</sequence>
<keyword id="KW-0067">ATP-binding</keyword>
<keyword id="KW-0963">Cytoplasm</keyword>
<keyword id="KW-0418">Kinase</keyword>
<keyword id="KW-0460">Magnesium</keyword>
<keyword id="KW-0479">Metal-binding</keyword>
<keyword id="KW-0546">Nucleotide metabolism</keyword>
<keyword id="KW-0547">Nucleotide-binding</keyword>
<keyword id="KW-0597">Phosphoprotein</keyword>
<keyword id="KW-0808">Transferase</keyword>
<reference key="1">
    <citation type="submission" date="2007-08" db="EMBL/GenBank/DDBJ databases">
        <authorList>
            <consortium name="The Vibrio harveyi Genome Sequencing Project"/>
            <person name="Bassler B."/>
            <person name="Clifton S.W."/>
            <person name="Fulton L."/>
            <person name="Delehaunty K."/>
            <person name="Fronick C."/>
            <person name="Harrison M."/>
            <person name="Markivic C."/>
            <person name="Fulton R."/>
            <person name="Tin-Wollam A.-M."/>
            <person name="Shah N."/>
            <person name="Pepin K."/>
            <person name="Nash W."/>
            <person name="Thiruvilangam P."/>
            <person name="Bhonagiri V."/>
            <person name="Waters C."/>
            <person name="Tu K.C."/>
            <person name="Irgon J."/>
            <person name="Wilson R.K."/>
        </authorList>
    </citation>
    <scope>NUCLEOTIDE SEQUENCE [LARGE SCALE GENOMIC DNA]</scope>
    <source>
        <strain>ATCC BAA-1116 / BB120</strain>
    </source>
</reference>
<comment type="function">
    <text evidence="1">Major role in the synthesis of nucleoside triphosphates other than ATP. The ATP gamma phosphate is transferred to the NDP beta phosphate via a ping-pong mechanism, using a phosphorylated active-site intermediate.</text>
</comment>
<comment type="catalytic activity">
    <reaction evidence="1">
        <text>a 2'-deoxyribonucleoside 5'-diphosphate + ATP = a 2'-deoxyribonucleoside 5'-triphosphate + ADP</text>
        <dbReference type="Rhea" id="RHEA:44640"/>
        <dbReference type="ChEBI" id="CHEBI:30616"/>
        <dbReference type="ChEBI" id="CHEBI:61560"/>
        <dbReference type="ChEBI" id="CHEBI:73316"/>
        <dbReference type="ChEBI" id="CHEBI:456216"/>
        <dbReference type="EC" id="2.7.4.6"/>
    </reaction>
</comment>
<comment type="catalytic activity">
    <reaction evidence="1">
        <text>a ribonucleoside 5'-diphosphate + ATP = a ribonucleoside 5'-triphosphate + ADP</text>
        <dbReference type="Rhea" id="RHEA:18113"/>
        <dbReference type="ChEBI" id="CHEBI:30616"/>
        <dbReference type="ChEBI" id="CHEBI:57930"/>
        <dbReference type="ChEBI" id="CHEBI:61557"/>
        <dbReference type="ChEBI" id="CHEBI:456216"/>
        <dbReference type="EC" id="2.7.4.6"/>
    </reaction>
</comment>
<comment type="cofactor">
    <cofactor evidence="1">
        <name>Mg(2+)</name>
        <dbReference type="ChEBI" id="CHEBI:18420"/>
    </cofactor>
</comment>
<comment type="subunit">
    <text evidence="1">Homotetramer.</text>
</comment>
<comment type="subcellular location">
    <subcellularLocation>
        <location evidence="1">Cytoplasm</location>
    </subcellularLocation>
</comment>
<comment type="similarity">
    <text evidence="1">Belongs to the NDK family.</text>
</comment>
<proteinExistence type="inferred from homology"/>
<feature type="chain" id="PRO_1000026310" description="Nucleoside diphosphate kinase">
    <location>
        <begin position="1"/>
        <end position="141"/>
    </location>
</feature>
<feature type="active site" description="Pros-phosphohistidine intermediate" evidence="1">
    <location>
        <position position="117"/>
    </location>
</feature>
<feature type="binding site" evidence="1">
    <location>
        <position position="11"/>
    </location>
    <ligand>
        <name>ATP</name>
        <dbReference type="ChEBI" id="CHEBI:30616"/>
    </ligand>
</feature>
<feature type="binding site" evidence="1">
    <location>
        <position position="59"/>
    </location>
    <ligand>
        <name>ATP</name>
        <dbReference type="ChEBI" id="CHEBI:30616"/>
    </ligand>
</feature>
<feature type="binding site" evidence="1">
    <location>
        <position position="87"/>
    </location>
    <ligand>
        <name>ATP</name>
        <dbReference type="ChEBI" id="CHEBI:30616"/>
    </ligand>
</feature>
<feature type="binding site" evidence="1">
    <location>
        <position position="93"/>
    </location>
    <ligand>
        <name>ATP</name>
        <dbReference type="ChEBI" id="CHEBI:30616"/>
    </ligand>
</feature>
<feature type="binding site" evidence="1">
    <location>
        <position position="104"/>
    </location>
    <ligand>
        <name>ATP</name>
        <dbReference type="ChEBI" id="CHEBI:30616"/>
    </ligand>
</feature>
<feature type="binding site" evidence="1">
    <location>
        <position position="114"/>
    </location>
    <ligand>
        <name>ATP</name>
        <dbReference type="ChEBI" id="CHEBI:30616"/>
    </ligand>
</feature>
<dbReference type="EC" id="2.7.4.6" evidence="1"/>
<dbReference type="EMBL" id="CP000789">
    <property type="protein sequence ID" value="ABU70057.1"/>
    <property type="molecule type" value="Genomic_DNA"/>
</dbReference>
<dbReference type="RefSeq" id="WP_005532589.1">
    <property type="nucleotide sequence ID" value="NC_022269.1"/>
</dbReference>
<dbReference type="SMR" id="A7MU38"/>
<dbReference type="GeneID" id="67378313"/>
<dbReference type="KEGG" id="vha:VIBHAR_01064"/>
<dbReference type="PATRIC" id="fig|338187.25.peg.1564"/>
<dbReference type="Proteomes" id="UP000008152">
    <property type="component" value="Chromosome I"/>
</dbReference>
<dbReference type="GO" id="GO:0005737">
    <property type="term" value="C:cytoplasm"/>
    <property type="evidence" value="ECO:0007669"/>
    <property type="project" value="UniProtKB-SubCell"/>
</dbReference>
<dbReference type="GO" id="GO:0005524">
    <property type="term" value="F:ATP binding"/>
    <property type="evidence" value="ECO:0007669"/>
    <property type="project" value="UniProtKB-UniRule"/>
</dbReference>
<dbReference type="GO" id="GO:0046872">
    <property type="term" value="F:metal ion binding"/>
    <property type="evidence" value="ECO:0007669"/>
    <property type="project" value="UniProtKB-KW"/>
</dbReference>
<dbReference type="GO" id="GO:0004550">
    <property type="term" value="F:nucleoside diphosphate kinase activity"/>
    <property type="evidence" value="ECO:0007669"/>
    <property type="project" value="UniProtKB-UniRule"/>
</dbReference>
<dbReference type="GO" id="GO:0006241">
    <property type="term" value="P:CTP biosynthetic process"/>
    <property type="evidence" value="ECO:0007669"/>
    <property type="project" value="UniProtKB-UniRule"/>
</dbReference>
<dbReference type="GO" id="GO:0006183">
    <property type="term" value="P:GTP biosynthetic process"/>
    <property type="evidence" value="ECO:0007669"/>
    <property type="project" value="UniProtKB-UniRule"/>
</dbReference>
<dbReference type="GO" id="GO:0006228">
    <property type="term" value="P:UTP biosynthetic process"/>
    <property type="evidence" value="ECO:0007669"/>
    <property type="project" value="UniProtKB-UniRule"/>
</dbReference>
<dbReference type="CDD" id="cd04413">
    <property type="entry name" value="NDPk_I"/>
    <property type="match status" value="1"/>
</dbReference>
<dbReference type="FunFam" id="3.30.70.141:FF:000001">
    <property type="entry name" value="Nucleoside diphosphate kinase"/>
    <property type="match status" value="1"/>
</dbReference>
<dbReference type="Gene3D" id="3.30.70.141">
    <property type="entry name" value="Nucleoside diphosphate kinase-like domain"/>
    <property type="match status" value="1"/>
</dbReference>
<dbReference type="HAMAP" id="MF_00451">
    <property type="entry name" value="NDP_kinase"/>
    <property type="match status" value="1"/>
</dbReference>
<dbReference type="InterPro" id="IPR034907">
    <property type="entry name" value="NDK-like_dom"/>
</dbReference>
<dbReference type="InterPro" id="IPR036850">
    <property type="entry name" value="NDK-like_dom_sf"/>
</dbReference>
<dbReference type="InterPro" id="IPR001564">
    <property type="entry name" value="Nucleoside_diP_kinase"/>
</dbReference>
<dbReference type="InterPro" id="IPR023005">
    <property type="entry name" value="Nucleoside_diP_kinase_AS"/>
</dbReference>
<dbReference type="NCBIfam" id="NF001908">
    <property type="entry name" value="PRK00668.1"/>
    <property type="match status" value="1"/>
</dbReference>
<dbReference type="PANTHER" id="PTHR46161">
    <property type="entry name" value="NUCLEOSIDE DIPHOSPHATE KINASE"/>
    <property type="match status" value="1"/>
</dbReference>
<dbReference type="PANTHER" id="PTHR46161:SF3">
    <property type="entry name" value="NUCLEOSIDE DIPHOSPHATE KINASE DDB_G0292928-RELATED"/>
    <property type="match status" value="1"/>
</dbReference>
<dbReference type="Pfam" id="PF00334">
    <property type="entry name" value="NDK"/>
    <property type="match status" value="1"/>
</dbReference>
<dbReference type="PRINTS" id="PR01243">
    <property type="entry name" value="NUCDPKINASE"/>
</dbReference>
<dbReference type="SMART" id="SM00562">
    <property type="entry name" value="NDK"/>
    <property type="match status" value="1"/>
</dbReference>
<dbReference type="SUPFAM" id="SSF54919">
    <property type="entry name" value="Nucleoside diphosphate kinase, NDK"/>
    <property type="match status" value="1"/>
</dbReference>
<dbReference type="PROSITE" id="PS00469">
    <property type="entry name" value="NDPK"/>
    <property type="match status" value="1"/>
</dbReference>
<dbReference type="PROSITE" id="PS51374">
    <property type="entry name" value="NDPK_LIKE"/>
    <property type="match status" value="1"/>
</dbReference>
<gene>
    <name evidence="1" type="primary">ndk</name>
    <name type="ordered locus">VIBHAR_01064</name>
</gene>
<evidence type="ECO:0000255" key="1">
    <source>
        <dbReference type="HAMAP-Rule" id="MF_00451"/>
    </source>
</evidence>
<organism>
    <name type="scientific">Vibrio campbellii (strain ATCC BAA-1116)</name>
    <dbReference type="NCBI Taxonomy" id="2902295"/>
    <lineage>
        <taxon>Bacteria</taxon>
        <taxon>Pseudomonadati</taxon>
        <taxon>Pseudomonadota</taxon>
        <taxon>Gammaproteobacteria</taxon>
        <taxon>Vibrionales</taxon>
        <taxon>Vibrionaceae</taxon>
        <taxon>Vibrio</taxon>
    </lineage>
</organism>
<accession>A7MU38</accession>
<protein>
    <recommendedName>
        <fullName evidence="1">Nucleoside diphosphate kinase</fullName>
        <shortName evidence="1">NDK</shortName>
        <shortName evidence="1">NDP kinase</shortName>
        <ecNumber evidence="1">2.7.4.6</ecNumber>
    </recommendedName>
    <alternativeName>
        <fullName evidence="1">Nucleoside-2-P kinase</fullName>
    </alternativeName>
</protein>